<protein>
    <recommendedName>
        <fullName evidence="1">UPF0231 protein Shewmr4_0656</fullName>
    </recommendedName>
</protein>
<feature type="chain" id="PRO_1000064369" description="UPF0231 protein Shewmr4_0656">
    <location>
        <begin position="1"/>
        <end position="124"/>
    </location>
</feature>
<gene>
    <name type="ordered locus">Shewmr4_0656</name>
</gene>
<name>Y656_SHESM</name>
<evidence type="ECO:0000255" key="1">
    <source>
        <dbReference type="HAMAP-Rule" id="MF_01053"/>
    </source>
</evidence>
<organism>
    <name type="scientific">Shewanella sp. (strain MR-4)</name>
    <dbReference type="NCBI Taxonomy" id="60480"/>
    <lineage>
        <taxon>Bacteria</taxon>
        <taxon>Pseudomonadati</taxon>
        <taxon>Pseudomonadota</taxon>
        <taxon>Gammaproteobacteria</taxon>
        <taxon>Alteromonadales</taxon>
        <taxon>Shewanellaceae</taxon>
        <taxon>Shewanella</taxon>
    </lineage>
</organism>
<dbReference type="EMBL" id="CP000446">
    <property type="protein sequence ID" value="ABI37736.1"/>
    <property type="molecule type" value="Genomic_DNA"/>
</dbReference>
<dbReference type="RefSeq" id="WP_011621454.1">
    <property type="nucleotide sequence ID" value="NC_008321.1"/>
</dbReference>
<dbReference type="KEGG" id="she:Shewmr4_0656"/>
<dbReference type="HOGENOM" id="CLU_139226_0_0_6"/>
<dbReference type="HAMAP" id="MF_01053">
    <property type="entry name" value="UPF0231"/>
    <property type="match status" value="1"/>
</dbReference>
<dbReference type="InterPro" id="IPR008249">
    <property type="entry name" value="UPF0231"/>
</dbReference>
<dbReference type="NCBIfam" id="NF003581">
    <property type="entry name" value="PRK05248.3-2"/>
    <property type="match status" value="1"/>
</dbReference>
<dbReference type="Pfam" id="PF06062">
    <property type="entry name" value="UPF0231"/>
    <property type="match status" value="1"/>
</dbReference>
<dbReference type="PIRSF" id="PIRSF006287">
    <property type="entry name" value="UCP006287"/>
    <property type="match status" value="1"/>
</dbReference>
<sequence>MEYEFRRNSLTGTYLASFSMDHEVLGQWFSEELGPELAKIQQVLDIIKDIQAGKRDSWRLIGGDLTLDLDEEQARIYANALGFEQEYELEESMSLYDAESEAYCGLEDLEEALLSWYEFVEKGR</sequence>
<reference key="1">
    <citation type="submission" date="2006-08" db="EMBL/GenBank/DDBJ databases">
        <title>Complete sequence of Shewanella sp. MR-4.</title>
        <authorList>
            <consortium name="US DOE Joint Genome Institute"/>
            <person name="Copeland A."/>
            <person name="Lucas S."/>
            <person name="Lapidus A."/>
            <person name="Barry K."/>
            <person name="Detter J.C."/>
            <person name="Glavina del Rio T."/>
            <person name="Hammon N."/>
            <person name="Israni S."/>
            <person name="Dalin E."/>
            <person name="Tice H."/>
            <person name="Pitluck S."/>
            <person name="Kiss H."/>
            <person name="Brettin T."/>
            <person name="Bruce D."/>
            <person name="Han C."/>
            <person name="Tapia R."/>
            <person name="Gilna P."/>
            <person name="Schmutz J."/>
            <person name="Larimer F."/>
            <person name="Land M."/>
            <person name="Hauser L."/>
            <person name="Kyrpides N."/>
            <person name="Mikhailova N."/>
            <person name="Nealson K."/>
            <person name="Konstantinidis K."/>
            <person name="Klappenbach J."/>
            <person name="Tiedje J."/>
            <person name="Richardson P."/>
        </authorList>
    </citation>
    <scope>NUCLEOTIDE SEQUENCE [LARGE SCALE GENOMIC DNA]</scope>
    <source>
        <strain>MR-4</strain>
    </source>
</reference>
<proteinExistence type="inferred from homology"/>
<comment type="similarity">
    <text evidence="1">Belongs to the UPF0231 family.</text>
</comment>
<accession>Q0HMI1</accession>